<reference key="1">
    <citation type="journal article" date="2008" name="PLoS Genet.">
        <title>Complete genome sequence of the N2-fixing broad host range endophyte Klebsiella pneumoniae 342 and virulence predictions verified in mice.</title>
        <authorList>
            <person name="Fouts D.E."/>
            <person name="Tyler H.L."/>
            <person name="DeBoy R.T."/>
            <person name="Daugherty S."/>
            <person name="Ren Q."/>
            <person name="Badger J.H."/>
            <person name="Durkin A.S."/>
            <person name="Huot H."/>
            <person name="Shrivastava S."/>
            <person name="Kothari S."/>
            <person name="Dodson R.J."/>
            <person name="Mohamoud Y."/>
            <person name="Khouri H."/>
            <person name="Roesch L.F.W."/>
            <person name="Krogfelt K.A."/>
            <person name="Struve C."/>
            <person name="Triplett E.W."/>
            <person name="Methe B.A."/>
        </authorList>
    </citation>
    <scope>NUCLEOTIDE SEQUENCE [LARGE SCALE GENOMIC DNA]</scope>
    <source>
        <strain>342</strain>
    </source>
</reference>
<comment type="function">
    <text evidence="1">Cell wall formation.</text>
</comment>
<comment type="catalytic activity">
    <reaction evidence="1">
        <text>UDP-N-acetyl-alpha-D-muramate + L-alanine + ATP = UDP-N-acetyl-alpha-D-muramoyl-L-alanine + ADP + phosphate + H(+)</text>
        <dbReference type="Rhea" id="RHEA:23372"/>
        <dbReference type="ChEBI" id="CHEBI:15378"/>
        <dbReference type="ChEBI" id="CHEBI:30616"/>
        <dbReference type="ChEBI" id="CHEBI:43474"/>
        <dbReference type="ChEBI" id="CHEBI:57972"/>
        <dbReference type="ChEBI" id="CHEBI:70757"/>
        <dbReference type="ChEBI" id="CHEBI:83898"/>
        <dbReference type="ChEBI" id="CHEBI:456216"/>
        <dbReference type="EC" id="6.3.2.8"/>
    </reaction>
</comment>
<comment type="pathway">
    <text evidence="1">Cell wall biogenesis; peptidoglycan biosynthesis.</text>
</comment>
<comment type="subcellular location">
    <subcellularLocation>
        <location evidence="1">Cytoplasm</location>
    </subcellularLocation>
</comment>
<comment type="similarity">
    <text evidence="1">Belongs to the MurCDEF family.</text>
</comment>
<evidence type="ECO:0000255" key="1">
    <source>
        <dbReference type="HAMAP-Rule" id="MF_00046"/>
    </source>
</evidence>
<accession>B5Y1U6</accession>
<protein>
    <recommendedName>
        <fullName evidence="1">UDP-N-acetylmuramate--L-alanine ligase</fullName>
        <ecNumber evidence="1">6.3.2.8</ecNumber>
    </recommendedName>
    <alternativeName>
        <fullName evidence="1">UDP-N-acetylmuramoyl-L-alanine synthetase</fullName>
    </alternativeName>
</protein>
<sequence length="491" mass="53478">MNTQDLAKLRSIVPEMRRVRHIHFVGIGGAGMGGIAEVLANEGYQISGSDLAPNPVTQQLSQLGATIYFNHRPENVRDASVVVVSSAISADNPEIVAAHEARIPVIRRAEMLAELMRFRHGIAIAGTHGKTTTTAMVSSIYAEAGLDPTFVNGGLVKAAGVHARLGHSRYLIAEADESDASFLHLQPMVAIVTNIEADHMDTYHGDFENLKQTFINFLHNLPFYGRAVMCVDDPVIRELLPRVGRQITTYGFSDDADVRVEDYRQLGAQGHFRLVRQDKEILQVTLNAPGRHNALNAAAAVAVATEEGIDDQAILRALESFQGTGRRFDFLGEFPLAEVNGKPGSAMLIDDYGHHPTEVDATIKAARAGWPDKNLVMLFQPHRYTRTRDLYDDFANVLTQVDALLMLDVYPAGEAPIPGADSRSLCRTIRGRGKVDPILVSDPAQAAEMLASVLTGNDLVLVQGAGNIGKIARHLAEIKLAPQKTEEERHG</sequence>
<organism>
    <name type="scientific">Klebsiella pneumoniae (strain 342)</name>
    <dbReference type="NCBI Taxonomy" id="507522"/>
    <lineage>
        <taxon>Bacteria</taxon>
        <taxon>Pseudomonadati</taxon>
        <taxon>Pseudomonadota</taxon>
        <taxon>Gammaproteobacteria</taxon>
        <taxon>Enterobacterales</taxon>
        <taxon>Enterobacteriaceae</taxon>
        <taxon>Klebsiella/Raoultella group</taxon>
        <taxon>Klebsiella</taxon>
        <taxon>Klebsiella pneumoniae complex</taxon>
    </lineage>
</organism>
<feature type="chain" id="PRO_1000091108" description="UDP-N-acetylmuramate--L-alanine ligase">
    <location>
        <begin position="1"/>
        <end position="491"/>
    </location>
</feature>
<feature type="binding site" evidence="1">
    <location>
        <begin position="126"/>
        <end position="132"/>
    </location>
    <ligand>
        <name>ATP</name>
        <dbReference type="ChEBI" id="CHEBI:30616"/>
    </ligand>
</feature>
<name>MURC_KLEP3</name>
<proteinExistence type="inferred from homology"/>
<keyword id="KW-0067">ATP-binding</keyword>
<keyword id="KW-0131">Cell cycle</keyword>
<keyword id="KW-0132">Cell division</keyword>
<keyword id="KW-0133">Cell shape</keyword>
<keyword id="KW-0961">Cell wall biogenesis/degradation</keyword>
<keyword id="KW-0963">Cytoplasm</keyword>
<keyword id="KW-0436">Ligase</keyword>
<keyword id="KW-0547">Nucleotide-binding</keyword>
<keyword id="KW-0573">Peptidoglycan synthesis</keyword>
<gene>
    <name evidence="1" type="primary">murC</name>
    <name type="ordered locus">KPK_4646</name>
</gene>
<dbReference type="EC" id="6.3.2.8" evidence="1"/>
<dbReference type="EMBL" id="CP000964">
    <property type="protein sequence ID" value="ACI09479.1"/>
    <property type="molecule type" value="Genomic_DNA"/>
</dbReference>
<dbReference type="SMR" id="B5Y1U6"/>
<dbReference type="KEGG" id="kpe:KPK_4646"/>
<dbReference type="HOGENOM" id="CLU_028104_2_2_6"/>
<dbReference type="UniPathway" id="UPA00219"/>
<dbReference type="Proteomes" id="UP000001734">
    <property type="component" value="Chromosome"/>
</dbReference>
<dbReference type="GO" id="GO:0005737">
    <property type="term" value="C:cytoplasm"/>
    <property type="evidence" value="ECO:0007669"/>
    <property type="project" value="UniProtKB-SubCell"/>
</dbReference>
<dbReference type="GO" id="GO:0005524">
    <property type="term" value="F:ATP binding"/>
    <property type="evidence" value="ECO:0007669"/>
    <property type="project" value="UniProtKB-UniRule"/>
</dbReference>
<dbReference type="GO" id="GO:0008763">
    <property type="term" value="F:UDP-N-acetylmuramate-L-alanine ligase activity"/>
    <property type="evidence" value="ECO:0007669"/>
    <property type="project" value="UniProtKB-UniRule"/>
</dbReference>
<dbReference type="GO" id="GO:0051301">
    <property type="term" value="P:cell division"/>
    <property type="evidence" value="ECO:0007669"/>
    <property type="project" value="UniProtKB-KW"/>
</dbReference>
<dbReference type="GO" id="GO:0071555">
    <property type="term" value="P:cell wall organization"/>
    <property type="evidence" value="ECO:0007669"/>
    <property type="project" value="UniProtKB-KW"/>
</dbReference>
<dbReference type="GO" id="GO:0009252">
    <property type="term" value="P:peptidoglycan biosynthetic process"/>
    <property type="evidence" value="ECO:0007669"/>
    <property type="project" value="UniProtKB-UniRule"/>
</dbReference>
<dbReference type="GO" id="GO:0008360">
    <property type="term" value="P:regulation of cell shape"/>
    <property type="evidence" value="ECO:0007669"/>
    <property type="project" value="UniProtKB-KW"/>
</dbReference>
<dbReference type="FunFam" id="3.40.1190.10:FF:000001">
    <property type="entry name" value="UDP-N-acetylmuramate--L-alanine ligase"/>
    <property type="match status" value="1"/>
</dbReference>
<dbReference type="FunFam" id="3.40.50.720:FF:000046">
    <property type="entry name" value="UDP-N-acetylmuramate--L-alanine ligase"/>
    <property type="match status" value="1"/>
</dbReference>
<dbReference type="FunFam" id="3.90.190.20:FF:000001">
    <property type="entry name" value="UDP-N-acetylmuramate--L-alanine ligase"/>
    <property type="match status" value="1"/>
</dbReference>
<dbReference type="Gene3D" id="3.90.190.20">
    <property type="entry name" value="Mur ligase, C-terminal domain"/>
    <property type="match status" value="1"/>
</dbReference>
<dbReference type="Gene3D" id="3.40.1190.10">
    <property type="entry name" value="Mur-like, catalytic domain"/>
    <property type="match status" value="1"/>
</dbReference>
<dbReference type="Gene3D" id="3.40.50.720">
    <property type="entry name" value="NAD(P)-binding Rossmann-like Domain"/>
    <property type="match status" value="1"/>
</dbReference>
<dbReference type="HAMAP" id="MF_00046">
    <property type="entry name" value="MurC"/>
    <property type="match status" value="1"/>
</dbReference>
<dbReference type="InterPro" id="IPR036565">
    <property type="entry name" value="Mur-like_cat_sf"/>
</dbReference>
<dbReference type="InterPro" id="IPR004101">
    <property type="entry name" value="Mur_ligase_C"/>
</dbReference>
<dbReference type="InterPro" id="IPR036615">
    <property type="entry name" value="Mur_ligase_C_dom_sf"/>
</dbReference>
<dbReference type="InterPro" id="IPR013221">
    <property type="entry name" value="Mur_ligase_cen"/>
</dbReference>
<dbReference type="InterPro" id="IPR000713">
    <property type="entry name" value="Mur_ligase_N"/>
</dbReference>
<dbReference type="InterPro" id="IPR050061">
    <property type="entry name" value="MurCDEF_pg_biosynth"/>
</dbReference>
<dbReference type="InterPro" id="IPR005758">
    <property type="entry name" value="UDP-N-AcMur_Ala_ligase_MurC"/>
</dbReference>
<dbReference type="NCBIfam" id="TIGR01082">
    <property type="entry name" value="murC"/>
    <property type="match status" value="1"/>
</dbReference>
<dbReference type="PANTHER" id="PTHR43445:SF3">
    <property type="entry name" value="UDP-N-ACETYLMURAMATE--L-ALANINE LIGASE"/>
    <property type="match status" value="1"/>
</dbReference>
<dbReference type="PANTHER" id="PTHR43445">
    <property type="entry name" value="UDP-N-ACETYLMURAMATE--L-ALANINE LIGASE-RELATED"/>
    <property type="match status" value="1"/>
</dbReference>
<dbReference type="Pfam" id="PF01225">
    <property type="entry name" value="Mur_ligase"/>
    <property type="match status" value="1"/>
</dbReference>
<dbReference type="Pfam" id="PF02875">
    <property type="entry name" value="Mur_ligase_C"/>
    <property type="match status" value="1"/>
</dbReference>
<dbReference type="Pfam" id="PF08245">
    <property type="entry name" value="Mur_ligase_M"/>
    <property type="match status" value="1"/>
</dbReference>
<dbReference type="SUPFAM" id="SSF51984">
    <property type="entry name" value="MurCD N-terminal domain"/>
    <property type="match status" value="1"/>
</dbReference>
<dbReference type="SUPFAM" id="SSF53623">
    <property type="entry name" value="MurD-like peptide ligases, catalytic domain"/>
    <property type="match status" value="1"/>
</dbReference>
<dbReference type="SUPFAM" id="SSF53244">
    <property type="entry name" value="MurD-like peptide ligases, peptide-binding domain"/>
    <property type="match status" value="1"/>
</dbReference>